<sequence length="776" mass="84553">MMTNGAKTLYDKVFEAHIVHQDESGSCLLYIDRHLVHEVTSPQAFEGLKTAGRPVRRTDCTLATVDHNIPTESRRHFRNTESFIKEADSRLQVQTLEQNVKDFHVPYLGMSDERQGIVHIIGPEQGFTLPGTTVVCGDSHTSTHGAFGALAFGIGTSEVEHVLATQTVIQSKSKNMRIHVEGSLSPGITSKDLILHIIGVIGTAGGTGCVIEFTGQAIQELTMEARMSMCNMAIEAGARAGMIQPDETTFEYLKGRPLAPTGAEWEKAVTYWKTLKTDEDAVFDISVTVKGADIRPTITWGTSPQDALPIDAAVPDPANVSDPIKRSGMEAALEYMGLEPNTLLKDIKIDKVFIGSCTNARIEDLRAAAAVVDGHRIAPTVKRAMVVPGSGLVKKQAEAEGLDKIFEAAGFEWREAGCSMCLGMNPDILGPKERCASTSNRNFEGRQGRLSRTHLMSPAMAAAAGIMGHFVDIREFEFKESSAPKVEVRHDTDSSTLEEANYGHAKEEPPSAELSDVAKQEKVNDIPVSNSSTQSPGSAPSADAGLQPFLQLQGIAAPLDKANVDTDAIIPKQFLKTIKRTGLKEGLFYDWRFAKHADGKVTGTDFVLNREPYRKATTLVVTGPNFGCGSSREHAPWALKDFGIMCIIAPSFGDIFYNNSFKNGLLPIRLPQDVIKEKLYPIASAGGELVIDLPAQQIADGEGHILVTQFDVEPSRKHCLVNGLDDIGLTLQKERFIADYEAMRRRDFSFLEGGSKLLPRISHSKPTSMPQAANDW</sequence>
<feature type="chain" id="PRO_0000233187" description="3-isopropylmalate dehydratase">
    <location>
        <begin position="1"/>
        <end position="776"/>
    </location>
</feature>
<feature type="region of interest" description="Disordered" evidence="2">
    <location>
        <begin position="482"/>
        <end position="518"/>
    </location>
</feature>
<feature type="region of interest" description="Disordered" evidence="2">
    <location>
        <begin position="525"/>
        <end position="544"/>
    </location>
</feature>
<feature type="compositionally biased region" description="Basic and acidic residues" evidence="2">
    <location>
        <begin position="482"/>
        <end position="493"/>
    </location>
</feature>
<feature type="compositionally biased region" description="Polar residues" evidence="2">
    <location>
        <begin position="527"/>
        <end position="538"/>
    </location>
</feature>
<feature type="binding site" evidence="1">
    <location>
        <position position="357"/>
    </location>
    <ligand>
        <name>[4Fe-4S] cluster</name>
        <dbReference type="ChEBI" id="CHEBI:49883"/>
    </ligand>
</feature>
<feature type="binding site" evidence="1">
    <location>
        <position position="418"/>
    </location>
    <ligand>
        <name>[4Fe-4S] cluster</name>
        <dbReference type="ChEBI" id="CHEBI:49883"/>
    </ligand>
</feature>
<feature type="binding site" evidence="1">
    <location>
        <position position="421"/>
    </location>
    <ligand>
        <name>[4Fe-4S] cluster</name>
        <dbReference type="ChEBI" id="CHEBI:49883"/>
    </ligand>
</feature>
<evidence type="ECO:0000250" key="1"/>
<evidence type="ECO:0000256" key="2">
    <source>
        <dbReference type="SAM" id="MobiDB-lite"/>
    </source>
</evidence>
<evidence type="ECO:0000305" key="3"/>
<keyword id="KW-0004">4Fe-4S</keyword>
<keyword id="KW-0028">Amino-acid biosynthesis</keyword>
<keyword id="KW-0100">Branched-chain amino acid biosynthesis</keyword>
<keyword id="KW-0408">Iron</keyword>
<keyword id="KW-0411">Iron-sulfur</keyword>
<keyword id="KW-0432">Leucine biosynthesis</keyword>
<keyword id="KW-0456">Lyase</keyword>
<keyword id="KW-0479">Metal-binding</keyword>
<keyword id="KW-1185">Reference proteome</keyword>
<organism>
    <name type="scientific">Eremothecium gossypii (strain ATCC 10895 / CBS 109.51 / FGSC 9923 / NRRL Y-1056)</name>
    <name type="common">Yeast</name>
    <name type="synonym">Ashbya gossypii</name>
    <dbReference type="NCBI Taxonomy" id="284811"/>
    <lineage>
        <taxon>Eukaryota</taxon>
        <taxon>Fungi</taxon>
        <taxon>Dikarya</taxon>
        <taxon>Ascomycota</taxon>
        <taxon>Saccharomycotina</taxon>
        <taxon>Saccharomycetes</taxon>
        <taxon>Saccharomycetales</taxon>
        <taxon>Saccharomycetaceae</taxon>
        <taxon>Eremothecium</taxon>
    </lineage>
</organism>
<dbReference type="EC" id="4.2.1.33"/>
<dbReference type="EMBL" id="AE016820">
    <property type="protein sequence ID" value="AAS54659.2"/>
    <property type="molecule type" value="Genomic_DNA"/>
</dbReference>
<dbReference type="RefSeq" id="NP_986835.2">
    <property type="nucleotide sequence ID" value="NM_211897.2"/>
</dbReference>
<dbReference type="SMR" id="Q74ZM9"/>
<dbReference type="FunCoup" id="Q74ZM9">
    <property type="interactions" value="269"/>
</dbReference>
<dbReference type="STRING" id="284811.Q74ZM9"/>
<dbReference type="EnsemblFungi" id="AAS54659">
    <property type="protein sequence ID" value="AAS54659"/>
    <property type="gene ID" value="AGOS_AGR169W"/>
</dbReference>
<dbReference type="GeneID" id="4623137"/>
<dbReference type="KEGG" id="ago:AGOS_AGR169W"/>
<dbReference type="eggNOG" id="KOG0454">
    <property type="taxonomic scope" value="Eukaryota"/>
</dbReference>
<dbReference type="HOGENOM" id="CLU_006714_1_0_1"/>
<dbReference type="InParanoid" id="Q74ZM9"/>
<dbReference type="OMA" id="EDNEPHT"/>
<dbReference type="OrthoDB" id="2279155at2759"/>
<dbReference type="UniPathway" id="UPA00048">
    <property type="reaction ID" value="UER00071"/>
</dbReference>
<dbReference type="Proteomes" id="UP000000591">
    <property type="component" value="Chromosome VII"/>
</dbReference>
<dbReference type="GO" id="GO:0009316">
    <property type="term" value="C:3-isopropylmalate dehydratase complex"/>
    <property type="evidence" value="ECO:0007669"/>
    <property type="project" value="InterPro"/>
</dbReference>
<dbReference type="GO" id="GO:0003861">
    <property type="term" value="F:3-isopropylmalate dehydratase activity"/>
    <property type="evidence" value="ECO:0007669"/>
    <property type="project" value="UniProtKB-EC"/>
</dbReference>
<dbReference type="GO" id="GO:0051539">
    <property type="term" value="F:4 iron, 4 sulfur cluster binding"/>
    <property type="evidence" value="ECO:0007669"/>
    <property type="project" value="UniProtKB-KW"/>
</dbReference>
<dbReference type="GO" id="GO:0046872">
    <property type="term" value="F:metal ion binding"/>
    <property type="evidence" value="ECO:0007669"/>
    <property type="project" value="UniProtKB-KW"/>
</dbReference>
<dbReference type="GO" id="GO:0009098">
    <property type="term" value="P:L-leucine biosynthetic process"/>
    <property type="evidence" value="ECO:0007669"/>
    <property type="project" value="UniProtKB-UniPathway"/>
</dbReference>
<dbReference type="CDD" id="cd01583">
    <property type="entry name" value="IPMI"/>
    <property type="match status" value="1"/>
</dbReference>
<dbReference type="CDD" id="cd01577">
    <property type="entry name" value="IPMI_Swivel"/>
    <property type="match status" value="1"/>
</dbReference>
<dbReference type="FunFam" id="3.30.499.10:FF:000006">
    <property type="entry name" value="3-isopropylmalate dehydratase large subunit"/>
    <property type="match status" value="1"/>
</dbReference>
<dbReference type="FunFam" id="3.30.499.10:FF:000007">
    <property type="entry name" value="3-isopropylmalate dehydratase large subunit"/>
    <property type="match status" value="1"/>
</dbReference>
<dbReference type="FunFam" id="3.20.19.10:FF:000003">
    <property type="entry name" value="3-isopropylmalate dehydratase small subunit"/>
    <property type="match status" value="1"/>
</dbReference>
<dbReference type="Gene3D" id="3.30.499.10">
    <property type="entry name" value="Aconitase, domain 3"/>
    <property type="match status" value="2"/>
</dbReference>
<dbReference type="Gene3D" id="3.20.19.10">
    <property type="entry name" value="Aconitase, domain 4"/>
    <property type="match status" value="1"/>
</dbReference>
<dbReference type="HAMAP" id="MF_01026">
    <property type="entry name" value="LeuC_type1"/>
    <property type="match status" value="1"/>
</dbReference>
<dbReference type="HAMAP" id="MF_01031">
    <property type="entry name" value="LeuD_type1"/>
    <property type="match status" value="1"/>
</dbReference>
<dbReference type="InterPro" id="IPR004430">
    <property type="entry name" value="3-IsopropMal_deHydase_lsu"/>
</dbReference>
<dbReference type="InterPro" id="IPR004431">
    <property type="entry name" value="3-IsopropMal_deHydase_ssu"/>
</dbReference>
<dbReference type="InterPro" id="IPR012235">
    <property type="entry name" value="3-IsopropMal_deHydtase_ssu/lsu"/>
</dbReference>
<dbReference type="InterPro" id="IPR015931">
    <property type="entry name" value="Acnase/IPM_dHydase_lsu_aba_1/3"/>
</dbReference>
<dbReference type="InterPro" id="IPR001030">
    <property type="entry name" value="Acoase/IPM_deHydtase_lsu_aba"/>
</dbReference>
<dbReference type="InterPro" id="IPR015928">
    <property type="entry name" value="Aconitase/3IPM_dehydase_swvl"/>
</dbReference>
<dbReference type="InterPro" id="IPR018136">
    <property type="entry name" value="Aconitase_4Fe-4S_BS"/>
</dbReference>
<dbReference type="InterPro" id="IPR036008">
    <property type="entry name" value="Aconitase_4Fe-4S_dom"/>
</dbReference>
<dbReference type="InterPro" id="IPR000573">
    <property type="entry name" value="AconitaseA/IPMdHydase_ssu_swvl"/>
</dbReference>
<dbReference type="InterPro" id="IPR050067">
    <property type="entry name" value="IPM_dehydratase_rel_enz"/>
</dbReference>
<dbReference type="InterPro" id="IPR033941">
    <property type="entry name" value="IPMI_cat"/>
</dbReference>
<dbReference type="InterPro" id="IPR033940">
    <property type="entry name" value="IPMI_Swivel"/>
</dbReference>
<dbReference type="NCBIfam" id="TIGR00170">
    <property type="entry name" value="leuC"/>
    <property type="match status" value="1"/>
</dbReference>
<dbReference type="NCBIfam" id="TIGR00171">
    <property type="entry name" value="leuD"/>
    <property type="match status" value="1"/>
</dbReference>
<dbReference type="NCBIfam" id="NF002458">
    <property type="entry name" value="PRK01641.1"/>
    <property type="match status" value="1"/>
</dbReference>
<dbReference type="NCBIfam" id="NF004016">
    <property type="entry name" value="PRK05478.1"/>
    <property type="match status" value="1"/>
</dbReference>
<dbReference type="NCBIfam" id="NF009116">
    <property type="entry name" value="PRK12466.1"/>
    <property type="match status" value="1"/>
</dbReference>
<dbReference type="PANTHER" id="PTHR43822:SF9">
    <property type="entry name" value="3-ISOPROPYLMALATE DEHYDRATASE"/>
    <property type="match status" value="1"/>
</dbReference>
<dbReference type="PANTHER" id="PTHR43822">
    <property type="entry name" value="HOMOACONITASE, MITOCHONDRIAL-RELATED"/>
    <property type="match status" value="1"/>
</dbReference>
<dbReference type="Pfam" id="PF00330">
    <property type="entry name" value="Aconitase"/>
    <property type="match status" value="1"/>
</dbReference>
<dbReference type="Pfam" id="PF00694">
    <property type="entry name" value="Aconitase_C"/>
    <property type="match status" value="1"/>
</dbReference>
<dbReference type="PIRSF" id="PIRSF001418">
    <property type="entry name" value="ACN"/>
    <property type="match status" value="1"/>
</dbReference>
<dbReference type="PRINTS" id="PR00415">
    <property type="entry name" value="ACONITASE"/>
</dbReference>
<dbReference type="SUPFAM" id="SSF53732">
    <property type="entry name" value="Aconitase iron-sulfur domain"/>
    <property type="match status" value="1"/>
</dbReference>
<dbReference type="SUPFAM" id="SSF52016">
    <property type="entry name" value="LeuD/IlvD-like"/>
    <property type="match status" value="1"/>
</dbReference>
<dbReference type="PROSITE" id="PS00450">
    <property type="entry name" value="ACONITASE_1"/>
    <property type="match status" value="1"/>
</dbReference>
<dbReference type="PROSITE" id="PS01244">
    <property type="entry name" value="ACONITASE_2"/>
    <property type="match status" value="1"/>
</dbReference>
<proteinExistence type="inferred from homology"/>
<accession>Q74ZM9</accession>
<reference key="1">
    <citation type="journal article" date="2004" name="Science">
        <title>The Ashbya gossypii genome as a tool for mapping the ancient Saccharomyces cerevisiae genome.</title>
        <authorList>
            <person name="Dietrich F.S."/>
            <person name="Voegeli S."/>
            <person name="Brachat S."/>
            <person name="Lerch A."/>
            <person name="Gates K."/>
            <person name="Steiner S."/>
            <person name="Mohr C."/>
            <person name="Poehlmann R."/>
            <person name="Luedi P."/>
            <person name="Choi S."/>
            <person name="Wing R.A."/>
            <person name="Flavier A."/>
            <person name="Gaffney T.D."/>
            <person name="Philippsen P."/>
        </authorList>
    </citation>
    <scope>NUCLEOTIDE SEQUENCE [LARGE SCALE GENOMIC DNA]</scope>
    <source>
        <strain>ATCC 10895 / CBS 109.51 / FGSC 9923 / NRRL Y-1056</strain>
    </source>
</reference>
<reference key="2">
    <citation type="journal article" date="2013" name="G3 (Bethesda)">
        <title>Genomes of Ashbya fungi isolated from insects reveal four mating-type loci, numerous translocations, lack of transposons, and distinct gene duplications.</title>
        <authorList>
            <person name="Dietrich F.S."/>
            <person name="Voegeli S."/>
            <person name="Kuo S."/>
            <person name="Philippsen P."/>
        </authorList>
    </citation>
    <scope>GENOME REANNOTATION</scope>
    <scope>SEQUENCE REVISION TO 169 AND 482</scope>
    <source>
        <strain>ATCC 10895 / CBS 109.51 / FGSC 9923 / NRRL Y-1056</strain>
    </source>
</reference>
<comment type="function">
    <text>Catalyzes the isomerization between 2-isopropylmalate and 3-isopropylmalate, via the formation of 2-isopropylmaleate.</text>
</comment>
<comment type="catalytic activity">
    <reaction>
        <text>(2R,3S)-3-isopropylmalate = (2S)-2-isopropylmalate</text>
        <dbReference type="Rhea" id="RHEA:32287"/>
        <dbReference type="ChEBI" id="CHEBI:1178"/>
        <dbReference type="ChEBI" id="CHEBI:35121"/>
        <dbReference type="EC" id="4.2.1.33"/>
    </reaction>
</comment>
<comment type="cofactor">
    <cofactor evidence="1">
        <name>[4Fe-4S] cluster</name>
        <dbReference type="ChEBI" id="CHEBI:49883"/>
    </cofactor>
    <text evidence="1">Binds 1 [4Fe-4S] cluster per subunit.</text>
</comment>
<comment type="pathway">
    <text>Amino-acid biosynthesis; L-leucine biosynthesis; L-leucine from 3-methyl-2-oxobutanoate: step 2/4.</text>
</comment>
<comment type="subunit">
    <text evidence="1">Monomer.</text>
</comment>
<comment type="similarity">
    <text evidence="3">Belongs to the aconitase/IPM isomerase family.</text>
</comment>
<name>LEUC_EREGS</name>
<protein>
    <recommendedName>
        <fullName>3-isopropylmalate dehydratase</fullName>
        <ecNumber>4.2.1.33</ecNumber>
    </recommendedName>
    <alternativeName>
        <fullName>Alpha-IPM isomerase</fullName>
        <shortName>IPMI</shortName>
    </alternativeName>
    <alternativeName>
        <fullName>Isopropylmalate isomerase</fullName>
    </alternativeName>
</protein>
<gene>
    <name type="primary">LEU1</name>
    <name type="ordered locus">AGR169W</name>
</gene>